<name>HOA_ECO7I</name>
<protein>
    <recommendedName>
        <fullName evidence="1">4-hydroxy-2-oxovalerate aldolase</fullName>
        <shortName evidence="1">HOA</shortName>
        <ecNumber evidence="1">4.1.3.39</ecNumber>
    </recommendedName>
    <alternativeName>
        <fullName evidence="1">4-hydroxy-2-keto-pentanoic acid aldolase</fullName>
    </alternativeName>
    <alternativeName>
        <fullName evidence="1">4-hydroxy-2-oxopentanoate aldolase</fullName>
    </alternativeName>
</protein>
<feature type="chain" id="PRO_0000387831" description="4-hydroxy-2-oxovalerate aldolase">
    <location>
        <begin position="1"/>
        <end position="337"/>
    </location>
</feature>
<feature type="domain" description="Pyruvate carboxyltransferase" evidence="1">
    <location>
        <begin position="6"/>
        <end position="258"/>
    </location>
</feature>
<feature type="active site" description="Proton acceptor" evidence="1">
    <location>
        <position position="18"/>
    </location>
</feature>
<feature type="binding site" evidence="1">
    <location>
        <begin position="14"/>
        <end position="15"/>
    </location>
    <ligand>
        <name>substrate</name>
    </ligand>
</feature>
<feature type="binding site" evidence="1">
    <location>
        <position position="15"/>
    </location>
    <ligand>
        <name>Mn(2+)</name>
        <dbReference type="ChEBI" id="CHEBI:29035"/>
    </ligand>
</feature>
<feature type="binding site" evidence="1">
    <location>
        <position position="168"/>
    </location>
    <ligand>
        <name>substrate</name>
    </ligand>
</feature>
<feature type="binding site" evidence="1">
    <location>
        <position position="197"/>
    </location>
    <ligand>
        <name>Mn(2+)</name>
        <dbReference type="ChEBI" id="CHEBI:29035"/>
    </ligand>
</feature>
<feature type="binding site" evidence="1">
    <location>
        <position position="197"/>
    </location>
    <ligand>
        <name>substrate</name>
    </ligand>
</feature>
<feature type="binding site" evidence="1">
    <location>
        <position position="199"/>
    </location>
    <ligand>
        <name>Mn(2+)</name>
        <dbReference type="ChEBI" id="CHEBI:29035"/>
    </ligand>
</feature>
<feature type="binding site" evidence="1">
    <location>
        <position position="288"/>
    </location>
    <ligand>
        <name>substrate</name>
    </ligand>
</feature>
<feature type="site" description="Transition state stabilizer" evidence="1">
    <location>
        <position position="14"/>
    </location>
</feature>
<sequence length="337" mass="36466">MNDKKLYISDVTLRDGMHAIRHQYSLENVRQVAKALDDARVDSIEVAHGDGLQGSSFNYGFGAHSDLEWIEAAADVVKHAKIATLLLPGIGTIHDLKNAWQAGARVVRVATHCTEADVSAQHIQYARELGMDTVGFLMMSHMTTPENLAKQAKLMEGYGATCIYVVDSGGAMNMSDIRDRFRALKAVLKPETQTGIHAHHNLSLGVANSIAAVEEGCDRIDASLAGMGAGAGNAPLEVFIAAADKLGWQHGTDLYALMDAADDLVRPLQDRPVRVDRETLALGYAGVYSSFLRHCETAAARYGLSAVDILVELGKRRMVGGQEDMIVDVALDLRNNK</sequence>
<organism>
    <name type="scientific">Escherichia coli O7:K1 (strain IAI39 / ExPEC)</name>
    <dbReference type="NCBI Taxonomy" id="585057"/>
    <lineage>
        <taxon>Bacteria</taxon>
        <taxon>Pseudomonadati</taxon>
        <taxon>Pseudomonadota</taxon>
        <taxon>Gammaproteobacteria</taxon>
        <taxon>Enterobacterales</taxon>
        <taxon>Enterobacteriaceae</taxon>
        <taxon>Escherichia</taxon>
    </lineage>
</organism>
<evidence type="ECO:0000255" key="1">
    <source>
        <dbReference type="HAMAP-Rule" id="MF_01656"/>
    </source>
</evidence>
<gene>
    <name evidence="1" type="primary">mhpE</name>
    <name type="ordered locus">ECIAI39_0326</name>
</gene>
<accession>B7NK03</accession>
<comment type="function">
    <text evidence="1">Catalyzes the retro-aldol cleavage of 4-hydroxy-2-oxopentanoate to pyruvate and acetaldehyde. Is involved in the meta-cleavage pathway for the degradation of aromatic compounds.</text>
</comment>
<comment type="catalytic activity">
    <reaction evidence="1">
        <text>(S)-4-hydroxy-2-oxopentanoate = acetaldehyde + pyruvate</text>
        <dbReference type="Rhea" id="RHEA:22624"/>
        <dbReference type="ChEBI" id="CHEBI:15343"/>
        <dbReference type="ChEBI" id="CHEBI:15361"/>
        <dbReference type="ChEBI" id="CHEBI:73143"/>
        <dbReference type="EC" id="4.1.3.39"/>
    </reaction>
</comment>
<comment type="pathway">
    <text evidence="1">Aromatic compound metabolism; 3-phenylpropanoate degradation.</text>
</comment>
<comment type="subunit">
    <text evidence="1">Interacts with MhpF.</text>
</comment>
<comment type="similarity">
    <text evidence="1">Belongs to the 4-hydroxy-2-oxovalerate aldolase family.</text>
</comment>
<keyword id="KW-0058">Aromatic hydrocarbons catabolism</keyword>
<keyword id="KW-0456">Lyase</keyword>
<keyword id="KW-0464">Manganese</keyword>
<keyword id="KW-0479">Metal-binding</keyword>
<dbReference type="EC" id="4.1.3.39" evidence="1"/>
<dbReference type="EMBL" id="CU928164">
    <property type="protein sequence ID" value="CAR16466.1"/>
    <property type="molecule type" value="Genomic_DNA"/>
</dbReference>
<dbReference type="RefSeq" id="WP_000998299.1">
    <property type="nucleotide sequence ID" value="NC_011750.1"/>
</dbReference>
<dbReference type="RefSeq" id="YP_002406368.1">
    <property type="nucleotide sequence ID" value="NC_011750.1"/>
</dbReference>
<dbReference type="SMR" id="B7NK03"/>
<dbReference type="STRING" id="585057.ECIAI39_0326"/>
<dbReference type="KEGG" id="ect:ECIAI39_0326"/>
<dbReference type="PATRIC" id="fig|585057.6.peg.353"/>
<dbReference type="HOGENOM" id="CLU_049173_0_0_6"/>
<dbReference type="UniPathway" id="UPA00714"/>
<dbReference type="Proteomes" id="UP000000749">
    <property type="component" value="Chromosome"/>
</dbReference>
<dbReference type="GO" id="GO:0003852">
    <property type="term" value="F:2-isopropylmalate synthase activity"/>
    <property type="evidence" value="ECO:0007669"/>
    <property type="project" value="TreeGrafter"/>
</dbReference>
<dbReference type="GO" id="GO:0008701">
    <property type="term" value="F:4-hydroxy-2-oxovalerate aldolase activity"/>
    <property type="evidence" value="ECO:0007669"/>
    <property type="project" value="UniProtKB-UniRule"/>
</dbReference>
<dbReference type="GO" id="GO:0030145">
    <property type="term" value="F:manganese ion binding"/>
    <property type="evidence" value="ECO:0007669"/>
    <property type="project" value="UniProtKB-UniRule"/>
</dbReference>
<dbReference type="GO" id="GO:0019380">
    <property type="term" value="P:3-phenylpropionate catabolic process"/>
    <property type="evidence" value="ECO:0007669"/>
    <property type="project" value="UniProtKB-UniRule"/>
</dbReference>
<dbReference type="GO" id="GO:0009098">
    <property type="term" value="P:L-leucine biosynthetic process"/>
    <property type="evidence" value="ECO:0007669"/>
    <property type="project" value="TreeGrafter"/>
</dbReference>
<dbReference type="CDD" id="cd07943">
    <property type="entry name" value="DRE_TIM_HOA"/>
    <property type="match status" value="1"/>
</dbReference>
<dbReference type="FunFam" id="1.10.8.60:FF:000042">
    <property type="entry name" value="4-hydroxy-2-oxovalerate aldolase"/>
    <property type="match status" value="1"/>
</dbReference>
<dbReference type="FunFam" id="3.20.20.70:FF:000072">
    <property type="entry name" value="4-hydroxy-2-oxovalerate aldolase"/>
    <property type="match status" value="1"/>
</dbReference>
<dbReference type="Gene3D" id="1.10.8.60">
    <property type="match status" value="1"/>
</dbReference>
<dbReference type="Gene3D" id="3.20.20.70">
    <property type="entry name" value="Aldolase class I"/>
    <property type="match status" value="1"/>
</dbReference>
<dbReference type="HAMAP" id="MF_01656">
    <property type="entry name" value="HOA"/>
    <property type="match status" value="1"/>
</dbReference>
<dbReference type="InterPro" id="IPR050073">
    <property type="entry name" value="2-IPM_HCS-like"/>
</dbReference>
<dbReference type="InterPro" id="IPR017629">
    <property type="entry name" value="4OH_2_O-val_aldolase"/>
</dbReference>
<dbReference type="InterPro" id="IPR013785">
    <property type="entry name" value="Aldolase_TIM"/>
</dbReference>
<dbReference type="InterPro" id="IPR012425">
    <property type="entry name" value="DmpG_comm"/>
</dbReference>
<dbReference type="InterPro" id="IPR035685">
    <property type="entry name" value="DRE_TIM_HOA"/>
</dbReference>
<dbReference type="InterPro" id="IPR000891">
    <property type="entry name" value="PYR_CT"/>
</dbReference>
<dbReference type="NCBIfam" id="TIGR03217">
    <property type="entry name" value="4OH_2_O_val_ald"/>
    <property type="match status" value="1"/>
</dbReference>
<dbReference type="NCBIfam" id="NF006049">
    <property type="entry name" value="PRK08195.1"/>
    <property type="match status" value="1"/>
</dbReference>
<dbReference type="PANTHER" id="PTHR10277:SF9">
    <property type="entry name" value="2-ISOPROPYLMALATE SYNTHASE 1, CHLOROPLASTIC-RELATED"/>
    <property type="match status" value="1"/>
</dbReference>
<dbReference type="PANTHER" id="PTHR10277">
    <property type="entry name" value="HOMOCITRATE SYNTHASE-RELATED"/>
    <property type="match status" value="1"/>
</dbReference>
<dbReference type="Pfam" id="PF07836">
    <property type="entry name" value="DmpG_comm"/>
    <property type="match status" value="1"/>
</dbReference>
<dbReference type="Pfam" id="PF00682">
    <property type="entry name" value="HMGL-like"/>
    <property type="match status" value="1"/>
</dbReference>
<dbReference type="SUPFAM" id="SSF51569">
    <property type="entry name" value="Aldolase"/>
    <property type="match status" value="1"/>
</dbReference>
<dbReference type="SUPFAM" id="SSF89000">
    <property type="entry name" value="post-HMGL domain-like"/>
    <property type="match status" value="1"/>
</dbReference>
<dbReference type="PROSITE" id="PS50991">
    <property type="entry name" value="PYR_CT"/>
    <property type="match status" value="1"/>
</dbReference>
<proteinExistence type="inferred from homology"/>
<reference key="1">
    <citation type="journal article" date="2009" name="PLoS Genet.">
        <title>Organised genome dynamics in the Escherichia coli species results in highly diverse adaptive paths.</title>
        <authorList>
            <person name="Touchon M."/>
            <person name="Hoede C."/>
            <person name="Tenaillon O."/>
            <person name="Barbe V."/>
            <person name="Baeriswyl S."/>
            <person name="Bidet P."/>
            <person name="Bingen E."/>
            <person name="Bonacorsi S."/>
            <person name="Bouchier C."/>
            <person name="Bouvet O."/>
            <person name="Calteau A."/>
            <person name="Chiapello H."/>
            <person name="Clermont O."/>
            <person name="Cruveiller S."/>
            <person name="Danchin A."/>
            <person name="Diard M."/>
            <person name="Dossat C."/>
            <person name="Karoui M.E."/>
            <person name="Frapy E."/>
            <person name="Garry L."/>
            <person name="Ghigo J.M."/>
            <person name="Gilles A.M."/>
            <person name="Johnson J."/>
            <person name="Le Bouguenec C."/>
            <person name="Lescat M."/>
            <person name="Mangenot S."/>
            <person name="Martinez-Jehanne V."/>
            <person name="Matic I."/>
            <person name="Nassif X."/>
            <person name="Oztas S."/>
            <person name="Petit M.A."/>
            <person name="Pichon C."/>
            <person name="Rouy Z."/>
            <person name="Ruf C.S."/>
            <person name="Schneider D."/>
            <person name="Tourret J."/>
            <person name="Vacherie B."/>
            <person name="Vallenet D."/>
            <person name="Medigue C."/>
            <person name="Rocha E.P.C."/>
            <person name="Denamur E."/>
        </authorList>
    </citation>
    <scope>NUCLEOTIDE SEQUENCE [LARGE SCALE GENOMIC DNA]</scope>
    <source>
        <strain>IAI39 / ExPEC</strain>
    </source>
</reference>